<keyword id="KW-0963">Cytoplasm</keyword>
<keyword id="KW-0227">DNA damage</keyword>
<keyword id="KW-0233">DNA recombination</keyword>
<keyword id="KW-0234">DNA repair</keyword>
<keyword id="KW-0238">DNA-binding</keyword>
<keyword id="KW-0255">Endonuclease</keyword>
<keyword id="KW-0378">Hydrolase</keyword>
<keyword id="KW-0460">Magnesium</keyword>
<keyword id="KW-0479">Metal-binding</keyword>
<keyword id="KW-0540">Nuclease</keyword>
<keyword id="KW-1185">Reference proteome</keyword>
<reference key="1">
    <citation type="journal article" date="2004" name="PLoS Biol.">
        <title>Genomic insights into methanotrophy: the complete genome sequence of Methylococcus capsulatus (Bath).</title>
        <authorList>
            <person name="Ward N.L."/>
            <person name="Larsen O."/>
            <person name="Sakwa J."/>
            <person name="Bruseth L."/>
            <person name="Khouri H.M."/>
            <person name="Durkin A.S."/>
            <person name="Dimitrov G."/>
            <person name="Jiang L."/>
            <person name="Scanlan D."/>
            <person name="Kang K.H."/>
            <person name="Lewis M.R."/>
            <person name="Nelson K.E."/>
            <person name="Methe B.A."/>
            <person name="Wu M."/>
            <person name="Heidelberg J.F."/>
            <person name="Paulsen I.T."/>
            <person name="Fouts D.E."/>
            <person name="Ravel J."/>
            <person name="Tettelin H."/>
            <person name="Ren Q."/>
            <person name="Read T.D."/>
            <person name="DeBoy R.T."/>
            <person name="Seshadri R."/>
            <person name="Salzberg S.L."/>
            <person name="Jensen H.B."/>
            <person name="Birkeland N.K."/>
            <person name="Nelson W.C."/>
            <person name="Dodson R.J."/>
            <person name="Grindhaug S.H."/>
            <person name="Holt I.E."/>
            <person name="Eidhammer I."/>
            <person name="Jonasen I."/>
            <person name="Vanaken S."/>
            <person name="Utterback T.R."/>
            <person name="Feldblyum T.V."/>
            <person name="Fraser C.M."/>
            <person name="Lillehaug J.R."/>
            <person name="Eisen J.A."/>
        </authorList>
    </citation>
    <scope>NUCLEOTIDE SEQUENCE [LARGE SCALE GENOMIC DNA]</scope>
    <source>
        <strain>ATCC 33009 / NCIMB 11132 / Bath</strain>
    </source>
</reference>
<name>RUVC_METCA</name>
<comment type="function">
    <text evidence="1">The RuvA-RuvB-RuvC complex processes Holliday junction (HJ) DNA during genetic recombination and DNA repair. Endonuclease that resolves HJ intermediates. Cleaves cruciform DNA by making single-stranded nicks across the HJ at symmetrical positions within the homologous arms, yielding a 5'-phosphate and a 3'-hydroxyl group; requires a central core of homology in the junction. The consensus cleavage sequence is 5'-(A/T)TT(C/G)-3'. Cleavage occurs on the 3'-side of the TT dinucleotide at the point of strand exchange. HJ branch migration catalyzed by RuvA-RuvB allows RuvC to scan DNA until it finds its consensus sequence, where it cleaves and resolves the cruciform DNA.</text>
</comment>
<comment type="catalytic activity">
    <reaction evidence="1">
        <text>Endonucleolytic cleavage at a junction such as a reciprocal single-stranded crossover between two homologous DNA duplexes (Holliday junction).</text>
        <dbReference type="EC" id="3.1.21.10"/>
    </reaction>
</comment>
<comment type="cofactor">
    <cofactor evidence="1">
        <name>Mg(2+)</name>
        <dbReference type="ChEBI" id="CHEBI:18420"/>
    </cofactor>
    <text evidence="1">Binds 2 Mg(2+) ion per subunit.</text>
</comment>
<comment type="subunit">
    <text evidence="1">Homodimer which binds Holliday junction (HJ) DNA. The HJ becomes 2-fold symmetrical on binding to RuvC with unstacked arms; it has a different conformation from HJ DNA in complex with RuvA. In the full resolvosome a probable DNA-RuvA(4)-RuvB(12)-RuvC(2) complex forms which resolves the HJ.</text>
</comment>
<comment type="subcellular location">
    <subcellularLocation>
        <location evidence="1">Cytoplasm</location>
    </subcellularLocation>
</comment>
<comment type="similarity">
    <text evidence="1">Belongs to the RuvC family.</text>
</comment>
<feature type="chain" id="PRO_0000225152" description="Crossover junction endodeoxyribonuclease RuvC">
    <location>
        <begin position="1"/>
        <end position="165"/>
    </location>
</feature>
<feature type="active site" evidence="1">
    <location>
        <position position="8"/>
    </location>
</feature>
<feature type="active site" evidence="1">
    <location>
        <position position="66"/>
    </location>
</feature>
<feature type="active site" evidence="1">
    <location>
        <position position="138"/>
    </location>
</feature>
<feature type="binding site" evidence="1">
    <location>
        <position position="8"/>
    </location>
    <ligand>
        <name>Mg(2+)</name>
        <dbReference type="ChEBI" id="CHEBI:18420"/>
        <label>1</label>
    </ligand>
</feature>
<feature type="binding site" evidence="1">
    <location>
        <position position="66"/>
    </location>
    <ligand>
        <name>Mg(2+)</name>
        <dbReference type="ChEBI" id="CHEBI:18420"/>
        <label>2</label>
    </ligand>
</feature>
<feature type="binding site" evidence="1">
    <location>
        <position position="138"/>
    </location>
    <ligand>
        <name>Mg(2+)</name>
        <dbReference type="ChEBI" id="CHEBI:18420"/>
        <label>1</label>
    </ligand>
</feature>
<protein>
    <recommendedName>
        <fullName evidence="1">Crossover junction endodeoxyribonuclease RuvC</fullName>
        <ecNumber evidence="1">3.1.21.10</ecNumber>
    </recommendedName>
    <alternativeName>
        <fullName evidence="1">Holliday junction nuclease RuvC</fullName>
    </alternativeName>
    <alternativeName>
        <fullName evidence="1">Holliday junction resolvase RuvC</fullName>
    </alternativeName>
</protein>
<dbReference type="EC" id="3.1.21.10" evidence="1"/>
<dbReference type="EMBL" id="AE017282">
    <property type="protein sequence ID" value="AAU92524.1"/>
    <property type="molecule type" value="Genomic_DNA"/>
</dbReference>
<dbReference type="RefSeq" id="WP_010960505.1">
    <property type="nucleotide sequence ID" value="NC_002977.6"/>
</dbReference>
<dbReference type="SMR" id="Q609L2"/>
<dbReference type="STRING" id="243233.MCA1221"/>
<dbReference type="GeneID" id="88223507"/>
<dbReference type="KEGG" id="mca:MCA1221"/>
<dbReference type="eggNOG" id="COG0817">
    <property type="taxonomic scope" value="Bacteria"/>
</dbReference>
<dbReference type="HOGENOM" id="CLU_091257_2_1_6"/>
<dbReference type="Proteomes" id="UP000006821">
    <property type="component" value="Chromosome"/>
</dbReference>
<dbReference type="GO" id="GO:0005737">
    <property type="term" value="C:cytoplasm"/>
    <property type="evidence" value="ECO:0007669"/>
    <property type="project" value="UniProtKB-SubCell"/>
</dbReference>
<dbReference type="GO" id="GO:0048476">
    <property type="term" value="C:Holliday junction resolvase complex"/>
    <property type="evidence" value="ECO:0007669"/>
    <property type="project" value="UniProtKB-UniRule"/>
</dbReference>
<dbReference type="GO" id="GO:0008821">
    <property type="term" value="F:crossover junction DNA endonuclease activity"/>
    <property type="evidence" value="ECO:0007669"/>
    <property type="project" value="UniProtKB-UniRule"/>
</dbReference>
<dbReference type="GO" id="GO:0003677">
    <property type="term" value="F:DNA binding"/>
    <property type="evidence" value="ECO:0007669"/>
    <property type="project" value="UniProtKB-KW"/>
</dbReference>
<dbReference type="GO" id="GO:0000287">
    <property type="term" value="F:magnesium ion binding"/>
    <property type="evidence" value="ECO:0007669"/>
    <property type="project" value="UniProtKB-UniRule"/>
</dbReference>
<dbReference type="GO" id="GO:0006310">
    <property type="term" value="P:DNA recombination"/>
    <property type="evidence" value="ECO:0007669"/>
    <property type="project" value="UniProtKB-UniRule"/>
</dbReference>
<dbReference type="GO" id="GO:0006281">
    <property type="term" value="P:DNA repair"/>
    <property type="evidence" value="ECO:0007669"/>
    <property type="project" value="UniProtKB-UniRule"/>
</dbReference>
<dbReference type="CDD" id="cd16962">
    <property type="entry name" value="RuvC"/>
    <property type="match status" value="1"/>
</dbReference>
<dbReference type="FunFam" id="3.30.420.10:FF:000002">
    <property type="entry name" value="Crossover junction endodeoxyribonuclease RuvC"/>
    <property type="match status" value="1"/>
</dbReference>
<dbReference type="Gene3D" id="3.30.420.10">
    <property type="entry name" value="Ribonuclease H-like superfamily/Ribonuclease H"/>
    <property type="match status" value="1"/>
</dbReference>
<dbReference type="HAMAP" id="MF_00034">
    <property type="entry name" value="RuvC"/>
    <property type="match status" value="1"/>
</dbReference>
<dbReference type="InterPro" id="IPR012337">
    <property type="entry name" value="RNaseH-like_sf"/>
</dbReference>
<dbReference type="InterPro" id="IPR036397">
    <property type="entry name" value="RNaseH_sf"/>
</dbReference>
<dbReference type="InterPro" id="IPR020563">
    <property type="entry name" value="X-over_junc_endoDNase_Mg_BS"/>
</dbReference>
<dbReference type="InterPro" id="IPR002176">
    <property type="entry name" value="X-over_junc_endoDNase_RuvC"/>
</dbReference>
<dbReference type="NCBIfam" id="TIGR00228">
    <property type="entry name" value="ruvC"/>
    <property type="match status" value="1"/>
</dbReference>
<dbReference type="PANTHER" id="PTHR30194">
    <property type="entry name" value="CROSSOVER JUNCTION ENDODEOXYRIBONUCLEASE RUVC"/>
    <property type="match status" value="1"/>
</dbReference>
<dbReference type="PANTHER" id="PTHR30194:SF3">
    <property type="entry name" value="CROSSOVER JUNCTION ENDODEOXYRIBONUCLEASE RUVC"/>
    <property type="match status" value="1"/>
</dbReference>
<dbReference type="Pfam" id="PF02075">
    <property type="entry name" value="RuvC"/>
    <property type="match status" value="1"/>
</dbReference>
<dbReference type="PRINTS" id="PR00696">
    <property type="entry name" value="RSOLVASERUVC"/>
</dbReference>
<dbReference type="SUPFAM" id="SSF53098">
    <property type="entry name" value="Ribonuclease H-like"/>
    <property type="match status" value="1"/>
</dbReference>
<dbReference type="PROSITE" id="PS01321">
    <property type="entry name" value="RUVC"/>
    <property type="match status" value="1"/>
</dbReference>
<sequence>MTRVLGIDPGSRVTGYGILDWTGKPVLVAAGCIRTETDDFPERLRRIFEGISRIVEEFRPEEMAVEQVFMHKNADSALKLGQARGAAICAGVAHGLPVHEYAARQVKLALVGKGSADKAQVQHMVCFLLGQAGPLALDASDALGVAFCHLHHRQTLSRMSRMVRR</sequence>
<gene>
    <name evidence="1" type="primary">ruvC</name>
    <name type="ordered locus">MCA1221</name>
</gene>
<accession>Q609L2</accession>
<evidence type="ECO:0000255" key="1">
    <source>
        <dbReference type="HAMAP-Rule" id="MF_00034"/>
    </source>
</evidence>
<organism>
    <name type="scientific">Methylococcus capsulatus (strain ATCC 33009 / NCIMB 11132 / Bath)</name>
    <dbReference type="NCBI Taxonomy" id="243233"/>
    <lineage>
        <taxon>Bacteria</taxon>
        <taxon>Pseudomonadati</taxon>
        <taxon>Pseudomonadota</taxon>
        <taxon>Gammaproteobacteria</taxon>
        <taxon>Methylococcales</taxon>
        <taxon>Methylococcaceae</taxon>
        <taxon>Methylococcus</taxon>
    </lineage>
</organism>
<proteinExistence type="inferred from homology"/>